<organism>
    <name type="scientific">Stachybotrys chlorohalonatus (strain IBT 40285)</name>
    <dbReference type="NCBI Taxonomy" id="1283841"/>
    <lineage>
        <taxon>Eukaryota</taxon>
        <taxon>Fungi</taxon>
        <taxon>Dikarya</taxon>
        <taxon>Ascomycota</taxon>
        <taxon>Pezizomycotina</taxon>
        <taxon>Sordariomycetes</taxon>
        <taxon>Hypocreomycetidae</taxon>
        <taxon>Hypocreales</taxon>
        <taxon>Stachybotryaceae</taxon>
        <taxon>Stachybotrys</taxon>
    </lineage>
</organism>
<feature type="chain" id="PRO_0000442403" description="Baeyer-Villiger monooxygenase ATR8">
    <location>
        <begin position="1"/>
        <end position="625"/>
    </location>
</feature>
<feature type="binding site" evidence="1">
    <location>
        <position position="112"/>
    </location>
    <ligand>
        <name>FAD</name>
        <dbReference type="ChEBI" id="CHEBI:57692"/>
    </ligand>
</feature>
<feature type="binding site" evidence="1">
    <location>
        <begin position="120"/>
        <end position="123"/>
    </location>
    <ligand>
        <name>FAD</name>
        <dbReference type="ChEBI" id="CHEBI:57692"/>
    </ligand>
</feature>
<feature type="binding site" evidence="1">
    <location>
        <begin position="130"/>
        <end position="132"/>
    </location>
    <ligand>
        <name>NADP(+)</name>
        <dbReference type="ChEBI" id="CHEBI:58349"/>
    </ligand>
</feature>
<feature type="binding site" evidence="1">
    <location>
        <position position="132"/>
    </location>
    <ligand>
        <name>FAD</name>
        <dbReference type="ChEBI" id="CHEBI:57692"/>
    </ligand>
</feature>
<feature type="binding site" evidence="1">
    <location>
        <position position="138"/>
    </location>
    <ligand>
        <name>FAD</name>
        <dbReference type="ChEBI" id="CHEBI:57692"/>
    </ligand>
</feature>
<feature type="binding site" evidence="1">
    <location>
        <begin position="266"/>
        <end position="272"/>
    </location>
    <ligand>
        <name>NADP(+)</name>
        <dbReference type="ChEBI" id="CHEBI:58349"/>
    </ligand>
</feature>
<feature type="binding site" evidence="1">
    <location>
        <begin position="289"/>
        <end position="290"/>
    </location>
    <ligand>
        <name>NADP(+)</name>
        <dbReference type="ChEBI" id="CHEBI:58349"/>
    </ligand>
</feature>
<feature type="binding site" evidence="1">
    <location>
        <begin position="405"/>
        <end position="406"/>
    </location>
    <ligand>
        <name>NADP(+)</name>
        <dbReference type="ChEBI" id="CHEBI:58349"/>
    </ligand>
</feature>
<feature type="site" description="Transition state stabilizer" evidence="1">
    <location>
        <position position="406"/>
    </location>
</feature>
<dbReference type="EC" id="1.14.13.-" evidence="5"/>
<dbReference type="EMBL" id="KL659308">
    <property type="protein sequence ID" value="KFA70082.1"/>
    <property type="molecule type" value="Genomic_DNA"/>
</dbReference>
<dbReference type="SMR" id="A0A084R1J7"/>
<dbReference type="STRING" id="1283841.A0A084R1J7"/>
<dbReference type="HOGENOM" id="CLU_006937_8_2_1"/>
<dbReference type="InParanoid" id="A0A084R1J7"/>
<dbReference type="OMA" id="ALKPWYG"/>
<dbReference type="OrthoDB" id="66881at2759"/>
<dbReference type="Proteomes" id="UP000028524">
    <property type="component" value="Unassembled WGS sequence"/>
</dbReference>
<dbReference type="GO" id="GO:0004497">
    <property type="term" value="F:monooxygenase activity"/>
    <property type="evidence" value="ECO:0007669"/>
    <property type="project" value="UniProtKB-KW"/>
</dbReference>
<dbReference type="FunFam" id="3.50.50.60:FF:000341">
    <property type="entry name" value="Baeyer-Villiger monooxygenase"/>
    <property type="match status" value="1"/>
</dbReference>
<dbReference type="Gene3D" id="3.50.50.60">
    <property type="entry name" value="FAD/NAD(P)-binding domain"/>
    <property type="match status" value="2"/>
</dbReference>
<dbReference type="InterPro" id="IPR050775">
    <property type="entry name" value="FAD-binding_Monooxygenases"/>
</dbReference>
<dbReference type="InterPro" id="IPR036188">
    <property type="entry name" value="FAD/NAD-bd_sf"/>
</dbReference>
<dbReference type="PANTHER" id="PTHR43098:SF4">
    <property type="entry name" value="BLR3857 PROTEIN"/>
    <property type="match status" value="1"/>
</dbReference>
<dbReference type="PANTHER" id="PTHR43098">
    <property type="entry name" value="L-ORNITHINE N(5)-MONOOXYGENASE-RELATED"/>
    <property type="match status" value="1"/>
</dbReference>
<dbReference type="Pfam" id="PF13738">
    <property type="entry name" value="Pyr_redox_3"/>
    <property type="match status" value="1"/>
</dbReference>
<dbReference type="PRINTS" id="PR00411">
    <property type="entry name" value="PNDRDTASEI"/>
</dbReference>
<dbReference type="SUPFAM" id="SSF51905">
    <property type="entry name" value="FAD/NAD(P)-binding domain"/>
    <property type="match status" value="1"/>
</dbReference>
<name>ATR8_STAC4</name>
<keyword id="KW-0274">FAD</keyword>
<keyword id="KW-0285">Flavoprotein</keyword>
<keyword id="KW-0503">Monooxygenase</keyword>
<keyword id="KW-0521">NADP</keyword>
<keyword id="KW-0560">Oxidoreductase</keyword>
<keyword id="KW-1185">Reference proteome</keyword>
<proteinExistence type="inferred from homology"/>
<gene>
    <name evidence="3" type="primary">ATR8</name>
    <name type="ORF">S40285_03333</name>
</gene>
<sequence>MAVEKVQAFEKVSIPTEKQPGSEDLGFDPAELQKKYEAERNLRIQNGGVSQYRSAWKSGFGYYLEDPNADANFSRDPISARYDVVIMGGGFSGLLVAARLVQQGITNFTILDKSADFGGTWYWSRYPGAQCDVDSTIYLPLLEEVGYIPKEKYSFGPEILEHAQRIAKHFGLYPKALFQTEVKTCHWSEEDSLWTVQTDRGDNLRAQFIVSAFGISHMPKLPGISGIENFQGKSFHASRWDYNYTGGDSTGNMTKLADKRVGIIGTGATAIQVVPKLAESAKELYVFQRTPSSVDVRNNRPTDAEWAKTLRPGWQQERIDNFYAITTGENVTEDLIDDGWTEIFRLVAAPFFASADIEQSLENRMEQVQIADFKKMESVRARVDSLVKDPATAASLKPWYNQFCKRPCFHDEYLQAFNHPNVTLVDTRGHGVDAVTTKGVLAQGKEYELDCLIYSTGYEWYTEWEQRTRSQVYGRNGLTITKKWSQGITTYHGWGVHGFPNFMVLSSAQVNNVPNYTHMVGYLSRHLAYIVRTCKDRGIKSVEPTATAESKWVQQVVEQGAARRDQMKLCTPGYLNHEGDITEKTDRLYSYNGSGDSKFQIILDKWRDDGKLVGLSIDCATEADL</sequence>
<protein>
    <recommendedName>
        <fullName evidence="3">Baeyer-Villiger monooxygenase ATR8</fullName>
        <ecNumber evidence="5">1.14.13.-</ecNumber>
    </recommendedName>
    <alternativeName>
        <fullName evidence="3">Core atranone cluster (CAC) protein 8</fullName>
    </alternativeName>
</protein>
<comment type="function">
    <text evidence="2 5">Baeyer-Villiger monooxygenase; part of the core atranone cluster (CAC) which products are predicted to catalyze most or all steps of mycotoxin atranone synthesis, starting from geranylgeranyl pyrophosphate (GGPP) (PubMed:25015739). The initial cyclization of GGPP to dolabellane is probably performed by the terpene cyclase ATR13 (PubMed:25015739). The Baeyer-Villiger oxidation near the end of the atranone synthesis, which converts atranones D and E to atranones F and G is predicted to be catalyzed by the monooxygenase ATR8 (PubMed:25015739). Of the CAC's other predicted gene products, the reducing PKS ATR6 might synthesize a polyketide chain (PubMed:25015739). This polyketide is probably transferred onto the atranone backbone by the polyketide transferase ATR5 (By similarity). Other predicted CAC products include 4 oxygenases (ATR2, ATR3, ATR4, and ATR14), 3 short-chain reductases (ATR7, ATR9, and ATR10), and a methyltransferase (ATR12) (PubMed:25015739). These may all be involved in the various steps of atranone biosynthesis, although their specific roles must await experimental determination (PubMed:25015739).</text>
</comment>
<comment type="cofactor">
    <cofactor evidence="1">
        <name>FAD</name>
        <dbReference type="ChEBI" id="CHEBI:57692"/>
    </cofactor>
    <text evidence="1">Binds 1 FAD per subunit.</text>
</comment>
<comment type="pathway">
    <text evidence="5">Mycotoxin biosynthesis.</text>
</comment>
<comment type="similarity">
    <text evidence="4">Belongs to the FAD-binding monooxygenase family.</text>
</comment>
<accession>A0A084R1J7</accession>
<evidence type="ECO:0000250" key="1">
    <source>
        <dbReference type="UniProtKB" id="Q47PU3"/>
    </source>
</evidence>
<evidence type="ECO:0000250" key="2">
    <source>
        <dbReference type="UniProtKB" id="Q4WAY4"/>
    </source>
</evidence>
<evidence type="ECO:0000303" key="3">
    <source>
    </source>
</evidence>
<evidence type="ECO:0000305" key="4"/>
<evidence type="ECO:0000305" key="5">
    <source>
    </source>
</evidence>
<reference key="1">
    <citation type="journal article" date="2014" name="BMC Genomics">
        <title>Comparative genome sequencing reveals chemotype-specific gene clusters in the toxigenic black mold Stachybotrys.</title>
        <authorList>
            <person name="Semeiks J."/>
            <person name="Borek D."/>
            <person name="Otwinowski Z."/>
            <person name="Grishin N.V."/>
        </authorList>
    </citation>
    <scope>NUCLEOTIDE SEQUENCE [LARGE SCALE GENOMIC DNA]</scope>
    <scope>IDENTIFICATION</scope>
    <scope>FUNCTION</scope>
    <source>
        <strain>IBT 40285</strain>
    </source>
</reference>